<organism>
    <name type="scientific">Bacillus mycoides (strain KBAB4)</name>
    <name type="common">Bacillus weihenstephanensis</name>
    <dbReference type="NCBI Taxonomy" id="315730"/>
    <lineage>
        <taxon>Bacteria</taxon>
        <taxon>Bacillati</taxon>
        <taxon>Bacillota</taxon>
        <taxon>Bacilli</taxon>
        <taxon>Bacillales</taxon>
        <taxon>Bacillaceae</taxon>
        <taxon>Bacillus</taxon>
        <taxon>Bacillus cereus group</taxon>
    </lineage>
</organism>
<evidence type="ECO:0000255" key="1">
    <source>
        <dbReference type="HAMAP-Rule" id="MF_01321"/>
    </source>
</evidence>
<evidence type="ECO:0000256" key="2">
    <source>
        <dbReference type="SAM" id="MobiDB-lite"/>
    </source>
</evidence>
<accession>A9VP69</accession>
<name>RPOB_BACMK</name>
<gene>
    <name evidence="1" type="primary">rpoB</name>
    <name type="ordered locus">BcerKBAB4_0097</name>
</gene>
<protein>
    <recommendedName>
        <fullName evidence="1">DNA-directed RNA polymerase subunit beta</fullName>
        <shortName evidence="1">RNAP subunit beta</shortName>
        <ecNumber evidence="1">2.7.7.6</ecNumber>
    </recommendedName>
    <alternativeName>
        <fullName evidence="1">RNA polymerase subunit beta</fullName>
    </alternativeName>
    <alternativeName>
        <fullName evidence="1">Transcriptase subunit beta</fullName>
    </alternativeName>
</protein>
<keyword id="KW-0240">DNA-directed RNA polymerase</keyword>
<keyword id="KW-0548">Nucleotidyltransferase</keyword>
<keyword id="KW-0804">Transcription</keyword>
<keyword id="KW-0808">Transferase</keyword>
<dbReference type="EC" id="2.7.7.6" evidence="1"/>
<dbReference type="EMBL" id="CP000903">
    <property type="protein sequence ID" value="ABY41366.1"/>
    <property type="molecule type" value="Genomic_DNA"/>
</dbReference>
<dbReference type="RefSeq" id="WP_002113316.1">
    <property type="nucleotide sequence ID" value="NC_010184.1"/>
</dbReference>
<dbReference type="SMR" id="A9VP69"/>
<dbReference type="GeneID" id="66264829"/>
<dbReference type="KEGG" id="bwe:BcerKBAB4_0097"/>
<dbReference type="eggNOG" id="COG0085">
    <property type="taxonomic scope" value="Bacteria"/>
</dbReference>
<dbReference type="HOGENOM" id="CLU_000524_4_1_9"/>
<dbReference type="Proteomes" id="UP000002154">
    <property type="component" value="Chromosome"/>
</dbReference>
<dbReference type="GO" id="GO:0000428">
    <property type="term" value="C:DNA-directed RNA polymerase complex"/>
    <property type="evidence" value="ECO:0007669"/>
    <property type="project" value="UniProtKB-KW"/>
</dbReference>
<dbReference type="GO" id="GO:0003677">
    <property type="term" value="F:DNA binding"/>
    <property type="evidence" value="ECO:0007669"/>
    <property type="project" value="UniProtKB-UniRule"/>
</dbReference>
<dbReference type="GO" id="GO:0003899">
    <property type="term" value="F:DNA-directed RNA polymerase activity"/>
    <property type="evidence" value="ECO:0007669"/>
    <property type="project" value="UniProtKB-UniRule"/>
</dbReference>
<dbReference type="GO" id="GO:0032549">
    <property type="term" value="F:ribonucleoside binding"/>
    <property type="evidence" value="ECO:0007669"/>
    <property type="project" value="InterPro"/>
</dbReference>
<dbReference type="GO" id="GO:0006351">
    <property type="term" value="P:DNA-templated transcription"/>
    <property type="evidence" value="ECO:0007669"/>
    <property type="project" value="UniProtKB-UniRule"/>
</dbReference>
<dbReference type="CDD" id="cd00653">
    <property type="entry name" value="RNA_pol_B_RPB2"/>
    <property type="match status" value="1"/>
</dbReference>
<dbReference type="FunFam" id="3.90.1800.10:FF:000001">
    <property type="entry name" value="DNA-directed RNA polymerase subunit beta"/>
    <property type="match status" value="1"/>
</dbReference>
<dbReference type="Gene3D" id="2.40.50.100">
    <property type="match status" value="1"/>
</dbReference>
<dbReference type="Gene3D" id="2.40.50.150">
    <property type="match status" value="1"/>
</dbReference>
<dbReference type="Gene3D" id="3.90.1100.10">
    <property type="match status" value="3"/>
</dbReference>
<dbReference type="Gene3D" id="2.40.270.10">
    <property type="entry name" value="DNA-directed RNA polymerase, subunit 2, domain 6"/>
    <property type="match status" value="1"/>
</dbReference>
<dbReference type="Gene3D" id="3.90.1800.10">
    <property type="entry name" value="RNA polymerase alpha subunit dimerisation domain"/>
    <property type="match status" value="1"/>
</dbReference>
<dbReference type="Gene3D" id="3.90.1110.10">
    <property type="entry name" value="RNA polymerase Rpb2, domain 2"/>
    <property type="match status" value="1"/>
</dbReference>
<dbReference type="HAMAP" id="MF_01321">
    <property type="entry name" value="RNApol_bact_RpoB"/>
    <property type="match status" value="1"/>
</dbReference>
<dbReference type="InterPro" id="IPR019462">
    <property type="entry name" value="DNA-dir_RNA_pol_bsu_external_1"/>
</dbReference>
<dbReference type="InterPro" id="IPR015712">
    <property type="entry name" value="DNA-dir_RNA_pol_su2"/>
</dbReference>
<dbReference type="InterPro" id="IPR007120">
    <property type="entry name" value="DNA-dir_RNAP_su2_dom"/>
</dbReference>
<dbReference type="InterPro" id="IPR037033">
    <property type="entry name" value="DNA-dir_RNAP_su2_hyb_sf"/>
</dbReference>
<dbReference type="InterPro" id="IPR010243">
    <property type="entry name" value="RNA_pol_bsu_bac"/>
</dbReference>
<dbReference type="InterPro" id="IPR007121">
    <property type="entry name" value="RNA_pol_bsu_CS"/>
</dbReference>
<dbReference type="InterPro" id="IPR007644">
    <property type="entry name" value="RNA_pol_bsu_protrusion"/>
</dbReference>
<dbReference type="InterPro" id="IPR007642">
    <property type="entry name" value="RNA_pol_Rpb2_2"/>
</dbReference>
<dbReference type="InterPro" id="IPR037034">
    <property type="entry name" value="RNA_pol_Rpb2_2_sf"/>
</dbReference>
<dbReference type="InterPro" id="IPR007645">
    <property type="entry name" value="RNA_pol_Rpb2_3"/>
</dbReference>
<dbReference type="InterPro" id="IPR007641">
    <property type="entry name" value="RNA_pol_Rpb2_7"/>
</dbReference>
<dbReference type="InterPro" id="IPR014724">
    <property type="entry name" value="RNA_pol_RPB2_OB-fold"/>
</dbReference>
<dbReference type="NCBIfam" id="NF001616">
    <property type="entry name" value="PRK00405.1"/>
    <property type="match status" value="1"/>
</dbReference>
<dbReference type="NCBIfam" id="TIGR02013">
    <property type="entry name" value="rpoB"/>
    <property type="match status" value="1"/>
</dbReference>
<dbReference type="PANTHER" id="PTHR20856">
    <property type="entry name" value="DNA-DIRECTED RNA POLYMERASE I SUBUNIT 2"/>
    <property type="match status" value="1"/>
</dbReference>
<dbReference type="Pfam" id="PF04563">
    <property type="entry name" value="RNA_pol_Rpb2_1"/>
    <property type="match status" value="1"/>
</dbReference>
<dbReference type="Pfam" id="PF04561">
    <property type="entry name" value="RNA_pol_Rpb2_2"/>
    <property type="match status" value="2"/>
</dbReference>
<dbReference type="Pfam" id="PF04565">
    <property type="entry name" value="RNA_pol_Rpb2_3"/>
    <property type="match status" value="1"/>
</dbReference>
<dbReference type="Pfam" id="PF10385">
    <property type="entry name" value="RNA_pol_Rpb2_45"/>
    <property type="match status" value="1"/>
</dbReference>
<dbReference type="Pfam" id="PF00562">
    <property type="entry name" value="RNA_pol_Rpb2_6"/>
    <property type="match status" value="1"/>
</dbReference>
<dbReference type="Pfam" id="PF04560">
    <property type="entry name" value="RNA_pol_Rpb2_7"/>
    <property type="match status" value="1"/>
</dbReference>
<dbReference type="SUPFAM" id="SSF64484">
    <property type="entry name" value="beta and beta-prime subunits of DNA dependent RNA-polymerase"/>
    <property type="match status" value="1"/>
</dbReference>
<dbReference type="PROSITE" id="PS01166">
    <property type="entry name" value="RNA_POL_BETA"/>
    <property type="match status" value="1"/>
</dbReference>
<reference key="1">
    <citation type="journal article" date="2008" name="Chem. Biol. Interact.">
        <title>Extending the Bacillus cereus group genomics to putative food-borne pathogens of different toxicity.</title>
        <authorList>
            <person name="Lapidus A."/>
            <person name="Goltsman E."/>
            <person name="Auger S."/>
            <person name="Galleron N."/>
            <person name="Segurens B."/>
            <person name="Dossat C."/>
            <person name="Land M.L."/>
            <person name="Broussolle V."/>
            <person name="Brillard J."/>
            <person name="Guinebretiere M.-H."/>
            <person name="Sanchis V."/>
            <person name="Nguen-the C."/>
            <person name="Lereclus D."/>
            <person name="Richardson P."/>
            <person name="Wincker P."/>
            <person name="Weissenbach J."/>
            <person name="Ehrlich S.D."/>
            <person name="Sorokin A."/>
        </authorList>
    </citation>
    <scope>NUCLEOTIDE SEQUENCE [LARGE SCALE GENOMIC DNA]</scope>
    <source>
        <strain>KBAB4</strain>
    </source>
</reference>
<feature type="chain" id="PRO_1000141660" description="DNA-directed RNA polymerase subunit beta">
    <location>
        <begin position="1"/>
        <end position="1177"/>
    </location>
</feature>
<feature type="region of interest" description="Disordered" evidence="2">
    <location>
        <begin position="1154"/>
        <end position="1177"/>
    </location>
</feature>
<feature type="compositionally biased region" description="Basic and acidic residues" evidence="2">
    <location>
        <begin position="1162"/>
        <end position="1177"/>
    </location>
</feature>
<sequence>MTGQLVQYGRHRQRRSYARISEVLELPNLIEIQTSSYQWFLDEGLREMFQDISPIEDFTGNLSLEFIDYSLGEPKYSVEECKERDVTYAAPLRVKVRLINKETGEVKEQDVFMGDFPLMTETGTFVINGAERVIVSQLVRSPSVYYSGKVDKNGKRGFTATVIPNRGAWLEYETDAKDVVYVRIDRTRKLPVTVLLRALGFGSDQEITELLGDNEYLSNTLEKDNTDSTEKALLEIYERLRPGEPPTVENAKSLLVSRFFDPKRYDLANVGRYKINKKLHIKNRLFNQRLAETLVDPETGEILAAEGTVLDRRTLDRILPYLEKNIGFKTAKPMGGVVAGDVELQSIKIYAPESEGERSINVIGNANITRDIKHITPGDILASISYFFNLLYKVGDTDDIDHLGNRRLRSVGELLQNQFRIGLSRMERVVRERMSIQDTNAITPQALINIRPVIASIKEFFGSSQLSQFMDQTNPLAELTHKRRLSALGPGGLTRERAGFEVRDVHYSHYGRMCPIETPEGPNIGLINSLSSFAKVNEFGFIETPYRRVDPETGLVTGQVDYLTADEEDNYVVAQANMKLSEVGEFLDEDIVARFRGENIVTNKERIDYMDVSPKQVVSAATACIPFLENDDSNRALMGANMQRQAVPLINPESPIVGTGMEYVSAKDSGAAVICKQPGVVERVEAREVWVRRYVDVDGQTVKGDLDRYKMQKFIRSNQGTCYNQRPIVSVGDQVVKGEILADGPSMELGELALGRNVLVGFMTWDGYNYEDAIIMSERLVKDDVYTSIHIEEYESEARDTKLGPEEITRDIPNVGEDALRNLDERGIIRVGAEVKDGDLLVGKVTPKGVTELTAEERLLHAIFGEKAREVRDTSLRVPHGGGGIILDVKVFNREDGDELPPGVNQLVRAYIVQKRKISEGDKMAGRHGNKGVISRILPEEDMPYLPDGTPIDIMLNPLGVPSRMNIGQVLELHLGMAARYLGIHIATPVFDGAREEDVWGTIEEAGMANDAKTILYDGRTGEPFDNRVSVGVMYMIKLAHMVDDKLHARSTGPYSLVTQQPLGGKAQFGGQRFGEMEVWALEAYGAAYTLQEILTVKSDDVIGRVKTYEAIVKGENVPEPGVPESFKVLIKELQSLGMDVKMMSINDTEIEMRDTEDDDDHQSADKLNVEVETTKE</sequence>
<proteinExistence type="inferred from homology"/>
<comment type="function">
    <text evidence="1">DNA-dependent RNA polymerase catalyzes the transcription of DNA into RNA using the four ribonucleoside triphosphates as substrates.</text>
</comment>
<comment type="catalytic activity">
    <reaction evidence="1">
        <text>RNA(n) + a ribonucleoside 5'-triphosphate = RNA(n+1) + diphosphate</text>
        <dbReference type="Rhea" id="RHEA:21248"/>
        <dbReference type="Rhea" id="RHEA-COMP:14527"/>
        <dbReference type="Rhea" id="RHEA-COMP:17342"/>
        <dbReference type="ChEBI" id="CHEBI:33019"/>
        <dbReference type="ChEBI" id="CHEBI:61557"/>
        <dbReference type="ChEBI" id="CHEBI:140395"/>
        <dbReference type="EC" id="2.7.7.6"/>
    </reaction>
</comment>
<comment type="subunit">
    <text evidence="1">The RNAP catalytic core consists of 2 alpha, 1 beta, 1 beta' and 1 omega subunit. When a sigma factor is associated with the core the holoenzyme is formed, which can initiate transcription.</text>
</comment>
<comment type="similarity">
    <text evidence="1">Belongs to the RNA polymerase beta chain family.</text>
</comment>